<gene>
    <name evidence="1" type="primary">recR</name>
    <name type="ordered locus">LEUM_0277</name>
</gene>
<keyword id="KW-0227">DNA damage</keyword>
<keyword id="KW-0233">DNA recombination</keyword>
<keyword id="KW-0234">DNA repair</keyword>
<keyword id="KW-0479">Metal-binding</keyword>
<keyword id="KW-1185">Reference proteome</keyword>
<keyword id="KW-0862">Zinc</keyword>
<keyword id="KW-0863">Zinc-finger</keyword>
<comment type="function">
    <text evidence="1">May play a role in DNA repair. It seems to be involved in an RecBC-independent recombinational process of DNA repair. It may act with RecF and RecO.</text>
</comment>
<comment type="similarity">
    <text evidence="1">Belongs to the RecR family.</text>
</comment>
<comment type="sequence caution" evidence="2">
    <conflict type="erroneous initiation">
        <sequence resource="EMBL-CDS" id="ABJ61404"/>
    </conflict>
</comment>
<organism>
    <name type="scientific">Leuconostoc mesenteroides subsp. mesenteroides (strain ATCC 8293 / DSM 20343 / BCRC 11652 / CCM 1803 / JCM 6124 / NCDO 523 / NBRC 100496 / NCIMB 8023 / NCTC 12954 / NRRL B-1118 / 37Y)</name>
    <dbReference type="NCBI Taxonomy" id="203120"/>
    <lineage>
        <taxon>Bacteria</taxon>
        <taxon>Bacillati</taxon>
        <taxon>Bacillota</taxon>
        <taxon>Bacilli</taxon>
        <taxon>Lactobacillales</taxon>
        <taxon>Lactobacillaceae</taxon>
        <taxon>Leuconostoc</taxon>
    </lineage>
</organism>
<feature type="chain" id="PRO_0000322904" description="Recombination protein RecR">
    <location>
        <begin position="1"/>
        <end position="201"/>
    </location>
</feature>
<feature type="domain" description="Toprim" evidence="1">
    <location>
        <begin position="82"/>
        <end position="178"/>
    </location>
</feature>
<feature type="zinc finger region" description="C4-type" evidence="1">
    <location>
        <begin position="57"/>
        <end position="74"/>
    </location>
</feature>
<accession>Q03ZG8</accession>
<name>RECR_LEUMM</name>
<reference key="1">
    <citation type="journal article" date="2006" name="Proc. Natl. Acad. Sci. U.S.A.">
        <title>Comparative genomics of the lactic acid bacteria.</title>
        <authorList>
            <person name="Makarova K.S."/>
            <person name="Slesarev A."/>
            <person name="Wolf Y.I."/>
            <person name="Sorokin A."/>
            <person name="Mirkin B."/>
            <person name="Koonin E.V."/>
            <person name="Pavlov A."/>
            <person name="Pavlova N."/>
            <person name="Karamychev V."/>
            <person name="Polouchine N."/>
            <person name="Shakhova V."/>
            <person name="Grigoriev I."/>
            <person name="Lou Y."/>
            <person name="Rohksar D."/>
            <person name="Lucas S."/>
            <person name="Huang K."/>
            <person name="Goodstein D.M."/>
            <person name="Hawkins T."/>
            <person name="Plengvidhya V."/>
            <person name="Welker D."/>
            <person name="Hughes J."/>
            <person name="Goh Y."/>
            <person name="Benson A."/>
            <person name="Baldwin K."/>
            <person name="Lee J.-H."/>
            <person name="Diaz-Muniz I."/>
            <person name="Dosti B."/>
            <person name="Smeianov V."/>
            <person name="Wechter W."/>
            <person name="Barabote R."/>
            <person name="Lorca G."/>
            <person name="Altermann E."/>
            <person name="Barrangou R."/>
            <person name="Ganesan B."/>
            <person name="Xie Y."/>
            <person name="Rawsthorne H."/>
            <person name="Tamir D."/>
            <person name="Parker C."/>
            <person name="Breidt F."/>
            <person name="Broadbent J.R."/>
            <person name="Hutkins R."/>
            <person name="O'Sullivan D."/>
            <person name="Steele J."/>
            <person name="Unlu G."/>
            <person name="Saier M.H. Jr."/>
            <person name="Klaenhammer T."/>
            <person name="Richardson P."/>
            <person name="Kozyavkin S."/>
            <person name="Weimer B.C."/>
            <person name="Mills D.A."/>
        </authorList>
    </citation>
    <scope>NUCLEOTIDE SEQUENCE [LARGE SCALE GENOMIC DNA]</scope>
    <source>
        <strain>ATCC 8293 / DSM 20343 / BCRC 11652 / CCM 1803 / JCM 6124 / NCDO 523 / NBRC 100496 / NCIMB 8023 / NCTC 12954 / NRRL B-1118 / 37Y</strain>
    </source>
</reference>
<sequence>MQYPEPIAKLIDSYTKLPGIGPKTATRLAFYTLGMNEEDVQDFSKALISAKTDLTFCSICGNITATDTDPCVICRDQSRDQSTVFVVENSRDVMAMENTRDYHGLYHVLNGVISPSAGTGPEDINLPSLIRRLSEHEEIKEVIVGTNANAEGEATAMYLARLLKPAGIAVTRLAHGLAVGSDIDYADELTLIKAVQGRTKL</sequence>
<proteinExistence type="inferred from homology"/>
<dbReference type="EMBL" id="CP000414">
    <property type="protein sequence ID" value="ABJ61404.1"/>
    <property type="status" value="ALT_INIT"/>
    <property type="molecule type" value="Genomic_DNA"/>
</dbReference>
<dbReference type="RefSeq" id="WP_010280652.1">
    <property type="nucleotide sequence ID" value="NC_008531.1"/>
</dbReference>
<dbReference type="SMR" id="Q03ZG8"/>
<dbReference type="EnsemblBacteria" id="ABJ61404">
    <property type="protein sequence ID" value="ABJ61404"/>
    <property type="gene ID" value="LEUM_0277"/>
</dbReference>
<dbReference type="GeneID" id="29576533"/>
<dbReference type="KEGG" id="lme:LEUM_0277"/>
<dbReference type="eggNOG" id="COG0353">
    <property type="taxonomic scope" value="Bacteria"/>
</dbReference>
<dbReference type="HOGENOM" id="CLU_060739_1_0_9"/>
<dbReference type="Proteomes" id="UP000000362">
    <property type="component" value="Chromosome"/>
</dbReference>
<dbReference type="GO" id="GO:0003677">
    <property type="term" value="F:DNA binding"/>
    <property type="evidence" value="ECO:0007669"/>
    <property type="project" value="UniProtKB-UniRule"/>
</dbReference>
<dbReference type="GO" id="GO:0008270">
    <property type="term" value="F:zinc ion binding"/>
    <property type="evidence" value="ECO:0007669"/>
    <property type="project" value="UniProtKB-KW"/>
</dbReference>
<dbReference type="GO" id="GO:0006310">
    <property type="term" value="P:DNA recombination"/>
    <property type="evidence" value="ECO:0007669"/>
    <property type="project" value="UniProtKB-UniRule"/>
</dbReference>
<dbReference type="GO" id="GO:0006281">
    <property type="term" value="P:DNA repair"/>
    <property type="evidence" value="ECO:0007669"/>
    <property type="project" value="UniProtKB-UniRule"/>
</dbReference>
<dbReference type="CDD" id="cd01025">
    <property type="entry name" value="TOPRIM_recR"/>
    <property type="match status" value="1"/>
</dbReference>
<dbReference type="Gene3D" id="3.30.60.80">
    <property type="match status" value="1"/>
</dbReference>
<dbReference type="Gene3D" id="3.40.1360.10">
    <property type="match status" value="1"/>
</dbReference>
<dbReference type="Gene3D" id="6.10.250.240">
    <property type="match status" value="1"/>
</dbReference>
<dbReference type="Gene3D" id="1.10.8.420">
    <property type="entry name" value="RecR Domain 1"/>
    <property type="match status" value="1"/>
</dbReference>
<dbReference type="HAMAP" id="MF_00017">
    <property type="entry name" value="RecR"/>
    <property type="match status" value="1"/>
</dbReference>
<dbReference type="InterPro" id="IPR000093">
    <property type="entry name" value="DNA_Rcmb_RecR"/>
</dbReference>
<dbReference type="InterPro" id="IPR023627">
    <property type="entry name" value="Rcmb_RecR"/>
</dbReference>
<dbReference type="InterPro" id="IPR015967">
    <property type="entry name" value="Rcmb_RecR_Znf"/>
</dbReference>
<dbReference type="InterPro" id="IPR006171">
    <property type="entry name" value="TOPRIM_dom"/>
</dbReference>
<dbReference type="InterPro" id="IPR034137">
    <property type="entry name" value="TOPRIM_RecR"/>
</dbReference>
<dbReference type="NCBIfam" id="TIGR00615">
    <property type="entry name" value="recR"/>
    <property type="match status" value="1"/>
</dbReference>
<dbReference type="PANTHER" id="PTHR30446">
    <property type="entry name" value="RECOMBINATION PROTEIN RECR"/>
    <property type="match status" value="1"/>
</dbReference>
<dbReference type="PANTHER" id="PTHR30446:SF0">
    <property type="entry name" value="RECOMBINATION PROTEIN RECR"/>
    <property type="match status" value="1"/>
</dbReference>
<dbReference type="Pfam" id="PF21175">
    <property type="entry name" value="RecR_C"/>
    <property type="match status" value="1"/>
</dbReference>
<dbReference type="Pfam" id="PF21176">
    <property type="entry name" value="RecR_HhH"/>
    <property type="match status" value="1"/>
</dbReference>
<dbReference type="Pfam" id="PF02132">
    <property type="entry name" value="RecR_ZnF"/>
    <property type="match status" value="1"/>
</dbReference>
<dbReference type="Pfam" id="PF13662">
    <property type="entry name" value="Toprim_4"/>
    <property type="match status" value="1"/>
</dbReference>
<dbReference type="SMART" id="SM00493">
    <property type="entry name" value="TOPRIM"/>
    <property type="match status" value="1"/>
</dbReference>
<dbReference type="SUPFAM" id="SSF111304">
    <property type="entry name" value="Recombination protein RecR"/>
    <property type="match status" value="1"/>
</dbReference>
<dbReference type="PROSITE" id="PS01300">
    <property type="entry name" value="RECR"/>
    <property type="match status" value="1"/>
</dbReference>
<dbReference type="PROSITE" id="PS50880">
    <property type="entry name" value="TOPRIM"/>
    <property type="match status" value="1"/>
</dbReference>
<evidence type="ECO:0000255" key="1">
    <source>
        <dbReference type="HAMAP-Rule" id="MF_00017"/>
    </source>
</evidence>
<evidence type="ECO:0000305" key="2"/>
<protein>
    <recommendedName>
        <fullName evidence="1">Recombination protein RecR</fullName>
    </recommendedName>
</protein>